<protein>
    <recommendedName>
        <fullName evidence="1">Nucleoside diphosphate kinase</fullName>
        <shortName evidence="1">NDK</shortName>
        <shortName evidence="1">NDP kinase</shortName>
        <ecNumber evidence="1">2.7.4.6</ecNumber>
    </recommendedName>
    <alternativeName>
        <fullName evidence="1">Nucleoside-2-P kinase</fullName>
    </alternativeName>
</protein>
<reference key="1">
    <citation type="journal article" date="2009" name="Infect. Immun.">
        <title>Comparative genomics reveal extensive transposon-mediated genomic plasticity and diversity among potential effector proteins within the genus Coxiella.</title>
        <authorList>
            <person name="Beare P.A."/>
            <person name="Unsworth N."/>
            <person name="Andoh M."/>
            <person name="Voth D.E."/>
            <person name="Omsland A."/>
            <person name="Gilk S.D."/>
            <person name="Williams K.P."/>
            <person name="Sobral B.W."/>
            <person name="Kupko J.J. III"/>
            <person name="Porcella S.F."/>
            <person name="Samuel J.E."/>
            <person name="Heinzen R.A."/>
        </authorList>
    </citation>
    <scope>NUCLEOTIDE SEQUENCE [LARGE SCALE GENOMIC DNA]</scope>
    <source>
        <strain>CbuG_Q212</strain>
    </source>
</reference>
<organism>
    <name type="scientific">Coxiella burnetii (strain CbuG_Q212)</name>
    <name type="common">Coxiella burnetii (strain Q212)</name>
    <dbReference type="NCBI Taxonomy" id="434923"/>
    <lineage>
        <taxon>Bacteria</taxon>
        <taxon>Pseudomonadati</taxon>
        <taxon>Pseudomonadota</taxon>
        <taxon>Gammaproteobacteria</taxon>
        <taxon>Legionellales</taxon>
        <taxon>Coxiellaceae</taxon>
        <taxon>Coxiella</taxon>
    </lineage>
</organism>
<accession>B6IZM3</accession>
<name>NDK_COXB2</name>
<evidence type="ECO:0000255" key="1">
    <source>
        <dbReference type="HAMAP-Rule" id="MF_00451"/>
    </source>
</evidence>
<keyword id="KW-0067">ATP-binding</keyword>
<keyword id="KW-0963">Cytoplasm</keyword>
<keyword id="KW-0418">Kinase</keyword>
<keyword id="KW-0460">Magnesium</keyword>
<keyword id="KW-0479">Metal-binding</keyword>
<keyword id="KW-0546">Nucleotide metabolism</keyword>
<keyword id="KW-0547">Nucleotide-binding</keyword>
<keyword id="KW-0597">Phosphoprotein</keyword>
<keyword id="KW-0808">Transferase</keyword>
<comment type="function">
    <text evidence="1">Major role in the synthesis of nucleoside triphosphates other than ATP. The ATP gamma phosphate is transferred to the NDP beta phosphate via a ping-pong mechanism, using a phosphorylated active-site intermediate.</text>
</comment>
<comment type="catalytic activity">
    <reaction evidence="1">
        <text>a 2'-deoxyribonucleoside 5'-diphosphate + ATP = a 2'-deoxyribonucleoside 5'-triphosphate + ADP</text>
        <dbReference type="Rhea" id="RHEA:44640"/>
        <dbReference type="ChEBI" id="CHEBI:30616"/>
        <dbReference type="ChEBI" id="CHEBI:61560"/>
        <dbReference type="ChEBI" id="CHEBI:73316"/>
        <dbReference type="ChEBI" id="CHEBI:456216"/>
        <dbReference type="EC" id="2.7.4.6"/>
    </reaction>
</comment>
<comment type="catalytic activity">
    <reaction evidence="1">
        <text>a ribonucleoside 5'-diphosphate + ATP = a ribonucleoside 5'-triphosphate + ADP</text>
        <dbReference type="Rhea" id="RHEA:18113"/>
        <dbReference type="ChEBI" id="CHEBI:30616"/>
        <dbReference type="ChEBI" id="CHEBI:57930"/>
        <dbReference type="ChEBI" id="CHEBI:61557"/>
        <dbReference type="ChEBI" id="CHEBI:456216"/>
        <dbReference type="EC" id="2.7.4.6"/>
    </reaction>
</comment>
<comment type="cofactor">
    <cofactor evidence="1">
        <name>Mg(2+)</name>
        <dbReference type="ChEBI" id="CHEBI:18420"/>
    </cofactor>
</comment>
<comment type="subunit">
    <text evidence="1">Homotetramer.</text>
</comment>
<comment type="subcellular location">
    <subcellularLocation>
        <location evidence="1">Cytoplasm</location>
    </subcellularLocation>
</comment>
<comment type="similarity">
    <text evidence="1">Belongs to the NDK family.</text>
</comment>
<sequence>MAIERTLSIIKPDAVAKNVIGQIYSRFEKAGLKIIAAKMCHLSKPQAEKFYAVHKDRPFYPDLVKFMTQGPVMIQVLEGENAIVKNREIMGATNPKEALPGTIRADFADSIDANAVHGSDGPETAKEEIAFFFKPDESFNSIGV</sequence>
<proteinExistence type="inferred from homology"/>
<gene>
    <name evidence="1" type="primary">ndk</name>
    <name type="ordered locus">CbuG_0754</name>
</gene>
<dbReference type="EC" id="2.7.4.6" evidence="1"/>
<dbReference type="EMBL" id="CP001019">
    <property type="protein sequence ID" value="ACJ18151.1"/>
    <property type="molecule type" value="Genomic_DNA"/>
</dbReference>
<dbReference type="RefSeq" id="WP_010958107.1">
    <property type="nucleotide sequence ID" value="NC_011527.1"/>
</dbReference>
<dbReference type="SMR" id="B6IZM3"/>
<dbReference type="KEGG" id="cbg:CbuG_0754"/>
<dbReference type="HOGENOM" id="CLU_060216_8_1_6"/>
<dbReference type="GO" id="GO:0005737">
    <property type="term" value="C:cytoplasm"/>
    <property type="evidence" value="ECO:0007669"/>
    <property type="project" value="UniProtKB-SubCell"/>
</dbReference>
<dbReference type="GO" id="GO:0005524">
    <property type="term" value="F:ATP binding"/>
    <property type="evidence" value="ECO:0007669"/>
    <property type="project" value="UniProtKB-UniRule"/>
</dbReference>
<dbReference type="GO" id="GO:0046872">
    <property type="term" value="F:metal ion binding"/>
    <property type="evidence" value="ECO:0007669"/>
    <property type="project" value="UniProtKB-KW"/>
</dbReference>
<dbReference type="GO" id="GO:0004550">
    <property type="term" value="F:nucleoside diphosphate kinase activity"/>
    <property type="evidence" value="ECO:0007669"/>
    <property type="project" value="UniProtKB-UniRule"/>
</dbReference>
<dbReference type="GO" id="GO:0006241">
    <property type="term" value="P:CTP biosynthetic process"/>
    <property type="evidence" value="ECO:0007669"/>
    <property type="project" value="UniProtKB-UniRule"/>
</dbReference>
<dbReference type="GO" id="GO:0006183">
    <property type="term" value="P:GTP biosynthetic process"/>
    <property type="evidence" value="ECO:0007669"/>
    <property type="project" value="UniProtKB-UniRule"/>
</dbReference>
<dbReference type="GO" id="GO:0006228">
    <property type="term" value="P:UTP biosynthetic process"/>
    <property type="evidence" value="ECO:0007669"/>
    <property type="project" value="UniProtKB-UniRule"/>
</dbReference>
<dbReference type="CDD" id="cd04413">
    <property type="entry name" value="NDPk_I"/>
    <property type="match status" value="1"/>
</dbReference>
<dbReference type="FunFam" id="3.30.70.141:FF:000001">
    <property type="entry name" value="Nucleoside diphosphate kinase"/>
    <property type="match status" value="1"/>
</dbReference>
<dbReference type="Gene3D" id="3.30.70.141">
    <property type="entry name" value="Nucleoside diphosphate kinase-like domain"/>
    <property type="match status" value="1"/>
</dbReference>
<dbReference type="HAMAP" id="MF_00451">
    <property type="entry name" value="NDP_kinase"/>
    <property type="match status" value="1"/>
</dbReference>
<dbReference type="InterPro" id="IPR034907">
    <property type="entry name" value="NDK-like_dom"/>
</dbReference>
<dbReference type="InterPro" id="IPR036850">
    <property type="entry name" value="NDK-like_dom_sf"/>
</dbReference>
<dbReference type="InterPro" id="IPR001564">
    <property type="entry name" value="Nucleoside_diP_kinase"/>
</dbReference>
<dbReference type="InterPro" id="IPR023005">
    <property type="entry name" value="Nucleoside_diP_kinase_AS"/>
</dbReference>
<dbReference type="NCBIfam" id="NF001908">
    <property type="entry name" value="PRK00668.1"/>
    <property type="match status" value="1"/>
</dbReference>
<dbReference type="PANTHER" id="PTHR11349">
    <property type="entry name" value="NUCLEOSIDE DIPHOSPHATE KINASE"/>
    <property type="match status" value="1"/>
</dbReference>
<dbReference type="Pfam" id="PF00334">
    <property type="entry name" value="NDK"/>
    <property type="match status" value="1"/>
</dbReference>
<dbReference type="PRINTS" id="PR01243">
    <property type="entry name" value="NUCDPKINASE"/>
</dbReference>
<dbReference type="SMART" id="SM00562">
    <property type="entry name" value="NDK"/>
    <property type="match status" value="1"/>
</dbReference>
<dbReference type="SUPFAM" id="SSF54919">
    <property type="entry name" value="Nucleoside diphosphate kinase, NDK"/>
    <property type="match status" value="1"/>
</dbReference>
<dbReference type="PROSITE" id="PS00469">
    <property type="entry name" value="NDPK"/>
    <property type="match status" value="1"/>
</dbReference>
<dbReference type="PROSITE" id="PS51374">
    <property type="entry name" value="NDPK_LIKE"/>
    <property type="match status" value="1"/>
</dbReference>
<feature type="chain" id="PRO_1000124951" description="Nucleoside diphosphate kinase">
    <location>
        <begin position="1"/>
        <end position="144"/>
    </location>
</feature>
<feature type="active site" description="Pros-phosphohistidine intermediate" evidence="1">
    <location>
        <position position="117"/>
    </location>
</feature>
<feature type="binding site" evidence="1">
    <location>
        <position position="11"/>
    </location>
    <ligand>
        <name>ATP</name>
        <dbReference type="ChEBI" id="CHEBI:30616"/>
    </ligand>
</feature>
<feature type="binding site" evidence="1">
    <location>
        <position position="59"/>
    </location>
    <ligand>
        <name>ATP</name>
        <dbReference type="ChEBI" id="CHEBI:30616"/>
    </ligand>
</feature>
<feature type="binding site" evidence="1">
    <location>
        <position position="87"/>
    </location>
    <ligand>
        <name>ATP</name>
        <dbReference type="ChEBI" id="CHEBI:30616"/>
    </ligand>
</feature>
<feature type="binding site" evidence="1">
    <location>
        <position position="93"/>
    </location>
    <ligand>
        <name>ATP</name>
        <dbReference type="ChEBI" id="CHEBI:30616"/>
    </ligand>
</feature>
<feature type="binding site" evidence="1">
    <location>
        <position position="104"/>
    </location>
    <ligand>
        <name>ATP</name>
        <dbReference type="ChEBI" id="CHEBI:30616"/>
    </ligand>
</feature>
<feature type="binding site" evidence="1">
    <location>
        <position position="114"/>
    </location>
    <ligand>
        <name>ATP</name>
        <dbReference type="ChEBI" id="CHEBI:30616"/>
    </ligand>
</feature>